<comment type="function">
    <text evidence="1">An aminoacyl-tRNA editing enzyme that deacylates mischarged D-aminoacyl-tRNAs. Also deacylates mischarged glycyl-tRNA(Ala), protecting cells against glycine mischarging by AlaRS. Acts via tRNA-based rather than protein-based catalysis; rejects L-amino acids rather than detecting D-amino acids in the active site. By recycling D-aminoacyl-tRNA to D-amino acids and free tRNA molecules, this enzyme counteracts the toxicity associated with the formation of D-aminoacyl-tRNA entities in vivo and helps enforce protein L-homochirality.</text>
</comment>
<comment type="catalytic activity">
    <reaction evidence="1">
        <text>glycyl-tRNA(Ala) + H2O = tRNA(Ala) + glycine + H(+)</text>
        <dbReference type="Rhea" id="RHEA:53744"/>
        <dbReference type="Rhea" id="RHEA-COMP:9657"/>
        <dbReference type="Rhea" id="RHEA-COMP:13640"/>
        <dbReference type="ChEBI" id="CHEBI:15377"/>
        <dbReference type="ChEBI" id="CHEBI:15378"/>
        <dbReference type="ChEBI" id="CHEBI:57305"/>
        <dbReference type="ChEBI" id="CHEBI:78442"/>
        <dbReference type="ChEBI" id="CHEBI:78522"/>
        <dbReference type="EC" id="3.1.1.96"/>
    </reaction>
</comment>
<comment type="catalytic activity">
    <reaction evidence="1">
        <text>a D-aminoacyl-tRNA + H2O = a tRNA + a D-alpha-amino acid + H(+)</text>
        <dbReference type="Rhea" id="RHEA:13953"/>
        <dbReference type="Rhea" id="RHEA-COMP:10123"/>
        <dbReference type="Rhea" id="RHEA-COMP:10124"/>
        <dbReference type="ChEBI" id="CHEBI:15377"/>
        <dbReference type="ChEBI" id="CHEBI:15378"/>
        <dbReference type="ChEBI" id="CHEBI:59871"/>
        <dbReference type="ChEBI" id="CHEBI:78442"/>
        <dbReference type="ChEBI" id="CHEBI:79333"/>
        <dbReference type="EC" id="3.1.1.96"/>
    </reaction>
</comment>
<comment type="subunit">
    <text evidence="1">Homodimer.</text>
</comment>
<comment type="subcellular location">
    <subcellularLocation>
        <location evidence="1">Cytoplasm</location>
    </subcellularLocation>
</comment>
<comment type="domain">
    <text evidence="1">A Gly-cisPro motif from one monomer fits into the active site of the other monomer to allow specific chiral rejection of L-amino acids.</text>
</comment>
<comment type="similarity">
    <text evidence="1">Belongs to the DTD family.</text>
</comment>
<sequence length="141" mass="14749">MRAVVQRVTRARVTVEGEVVGAVDGPGLLVLLGVTHDDGPAQVELIARKVAQLRILRGERAAADVGAPVLLVSQFTLYADTRKGRRPTWNAAAPGDVAQPLVDAVADALRGHGLPVETGRFGADMAVELVNDGPTTILLDA</sequence>
<accession>A6W6D7</accession>
<evidence type="ECO:0000255" key="1">
    <source>
        <dbReference type="HAMAP-Rule" id="MF_00518"/>
    </source>
</evidence>
<protein>
    <recommendedName>
        <fullName evidence="1">D-aminoacyl-tRNA deacylase</fullName>
        <shortName evidence="1">DTD</shortName>
        <ecNumber evidence="1">3.1.1.96</ecNumber>
    </recommendedName>
    <alternativeName>
        <fullName evidence="1">Gly-tRNA(Ala) deacylase</fullName>
    </alternativeName>
</protein>
<gene>
    <name evidence="1" type="primary">dtd</name>
    <name type="ordered locus">Krad_0888</name>
</gene>
<proteinExistence type="inferred from homology"/>
<feature type="chain" id="PRO_1000081656" description="D-aminoacyl-tRNA deacylase">
    <location>
        <begin position="1"/>
        <end position="141"/>
    </location>
</feature>
<feature type="short sequence motif" description="Gly-cisPro motif, important for rejection of L-amino acids" evidence="1">
    <location>
        <begin position="133"/>
        <end position="134"/>
    </location>
</feature>
<keyword id="KW-0963">Cytoplasm</keyword>
<keyword id="KW-0378">Hydrolase</keyword>
<keyword id="KW-1185">Reference proteome</keyword>
<keyword id="KW-0694">RNA-binding</keyword>
<keyword id="KW-0820">tRNA-binding</keyword>
<organism>
    <name type="scientific">Kineococcus radiotolerans (strain ATCC BAA-149 / DSM 14245 / SRS30216)</name>
    <dbReference type="NCBI Taxonomy" id="266940"/>
    <lineage>
        <taxon>Bacteria</taxon>
        <taxon>Bacillati</taxon>
        <taxon>Actinomycetota</taxon>
        <taxon>Actinomycetes</taxon>
        <taxon>Kineosporiales</taxon>
        <taxon>Kineosporiaceae</taxon>
        <taxon>Kineococcus</taxon>
    </lineage>
</organism>
<reference key="1">
    <citation type="journal article" date="2008" name="PLoS ONE">
        <title>Survival in nuclear waste, extreme resistance, and potential applications gleaned from the genome sequence of Kineococcus radiotolerans SRS30216.</title>
        <authorList>
            <person name="Bagwell C.E."/>
            <person name="Bhat S."/>
            <person name="Hawkins G.M."/>
            <person name="Smith B.W."/>
            <person name="Biswas T."/>
            <person name="Hoover T.R."/>
            <person name="Saunders E."/>
            <person name="Han C.S."/>
            <person name="Tsodikov O.V."/>
            <person name="Shimkets L.J."/>
        </authorList>
    </citation>
    <scope>NUCLEOTIDE SEQUENCE [LARGE SCALE GENOMIC DNA]</scope>
    <source>
        <strain>ATCC BAA-149 / DSM 14245 / SRS30216</strain>
    </source>
</reference>
<name>DTD_KINRD</name>
<dbReference type="EC" id="3.1.1.96" evidence="1"/>
<dbReference type="EMBL" id="CP000750">
    <property type="protein sequence ID" value="ABS02376.1"/>
    <property type="molecule type" value="Genomic_DNA"/>
</dbReference>
<dbReference type="RefSeq" id="WP_012084774.1">
    <property type="nucleotide sequence ID" value="NC_009664.2"/>
</dbReference>
<dbReference type="SMR" id="A6W6D7"/>
<dbReference type="STRING" id="266940.Krad_0888"/>
<dbReference type="KEGG" id="kra:Krad_0888"/>
<dbReference type="eggNOG" id="COG1490">
    <property type="taxonomic scope" value="Bacteria"/>
</dbReference>
<dbReference type="HOGENOM" id="CLU_076901_1_2_11"/>
<dbReference type="OrthoDB" id="9801395at2"/>
<dbReference type="Proteomes" id="UP000001116">
    <property type="component" value="Chromosome"/>
</dbReference>
<dbReference type="GO" id="GO:0005737">
    <property type="term" value="C:cytoplasm"/>
    <property type="evidence" value="ECO:0007669"/>
    <property type="project" value="UniProtKB-SubCell"/>
</dbReference>
<dbReference type="GO" id="GO:0051500">
    <property type="term" value="F:D-tyrosyl-tRNA(Tyr) deacylase activity"/>
    <property type="evidence" value="ECO:0007669"/>
    <property type="project" value="TreeGrafter"/>
</dbReference>
<dbReference type="GO" id="GO:0106026">
    <property type="term" value="F:Gly-tRNA(Ala) deacylase activity"/>
    <property type="evidence" value="ECO:0007669"/>
    <property type="project" value="UniProtKB-UniRule"/>
</dbReference>
<dbReference type="GO" id="GO:0043908">
    <property type="term" value="F:Ser(Gly)-tRNA(Ala) hydrolase activity"/>
    <property type="evidence" value="ECO:0007669"/>
    <property type="project" value="UniProtKB-UniRule"/>
</dbReference>
<dbReference type="GO" id="GO:0000049">
    <property type="term" value="F:tRNA binding"/>
    <property type="evidence" value="ECO:0007669"/>
    <property type="project" value="UniProtKB-UniRule"/>
</dbReference>
<dbReference type="GO" id="GO:0019478">
    <property type="term" value="P:D-amino acid catabolic process"/>
    <property type="evidence" value="ECO:0007669"/>
    <property type="project" value="UniProtKB-UniRule"/>
</dbReference>
<dbReference type="FunFam" id="3.50.80.10:FF:000001">
    <property type="entry name" value="D-aminoacyl-tRNA deacylase"/>
    <property type="match status" value="1"/>
</dbReference>
<dbReference type="Gene3D" id="3.50.80.10">
    <property type="entry name" value="D-tyrosyl-tRNA(Tyr) deacylase"/>
    <property type="match status" value="1"/>
</dbReference>
<dbReference type="HAMAP" id="MF_00518">
    <property type="entry name" value="Deacylase_Dtd"/>
    <property type="match status" value="1"/>
</dbReference>
<dbReference type="InterPro" id="IPR003732">
    <property type="entry name" value="Daa-tRNA_deacyls_DTD"/>
</dbReference>
<dbReference type="InterPro" id="IPR023509">
    <property type="entry name" value="DTD-like_sf"/>
</dbReference>
<dbReference type="NCBIfam" id="TIGR00256">
    <property type="entry name" value="D-aminoacyl-tRNA deacylase"/>
    <property type="match status" value="1"/>
</dbReference>
<dbReference type="PANTHER" id="PTHR10472:SF5">
    <property type="entry name" value="D-AMINOACYL-TRNA DEACYLASE 1"/>
    <property type="match status" value="1"/>
</dbReference>
<dbReference type="PANTHER" id="PTHR10472">
    <property type="entry name" value="D-TYROSYL-TRNA TYR DEACYLASE"/>
    <property type="match status" value="1"/>
</dbReference>
<dbReference type="Pfam" id="PF02580">
    <property type="entry name" value="Tyr_Deacylase"/>
    <property type="match status" value="1"/>
</dbReference>
<dbReference type="SUPFAM" id="SSF69500">
    <property type="entry name" value="DTD-like"/>
    <property type="match status" value="1"/>
</dbReference>